<comment type="function">
    <text evidence="3 6 7">3-keto-steroid reductase; part of the third module of ergosterol biosynthesis pathway that includes by the late steps of the pathway (By similarity). Erg27 is a catalytic component of the C-4 demethylation complex that catalyze the reduction of the keto group on the C-3 (By similarity). The third module or late pathway involves the ergosterol synthesis itself through consecutive reactions that mainly occur in the endoplasmic reticulum (ER) membrane. Firstly, the squalene synthase erg9 catalyzes the condensation of 2 farnesyl pyrophosphate moieties to form squalene, which is the precursor of all steroids. Secondly, squalene is converted into lanosterol by the consecutive action of the squalene epoxidase erg1 and the lanosterol synthase erg7. The lanosterol 14-alpha-demethylase erg11/cyp1 catalyzes C14-demethylation of lanosterol to produce 4,4'-dimethyl cholesta-8,14,24-triene-3-beta-ol. In the next steps, a complex process involving various demethylation, reduction and desaturation reactions catalyzed by the C-14 reductase erg24 and the C-4 demethylation complex erg25-erg26-erg27 leads to the production of zymosterol. Erg28 likely functions in the C-4 demethylation complex reaction by tethering erg26 and Erg27 to the endoplasmic reticulum or to facilitate interaction between these proteins. Then, the sterol 24-C-methyltransferase erg6 catalyzes the methyl transfer from S-adenosyl-methionine to the C-24 of zymosterol to form fecosterol. The C-8 sterol isomerase erg2 catalyzes the reaction which results in unsaturation at C-7 in the B ring of sterols and thus converts fecosterol to episterol. The sterol-C5-desaturases erg31 and erg32 then catalyze the introduction of a C-5 double bond in the B ring to produce 5-dehydroepisterol. The C-22 sterol desaturase erg5 further converts 5-dehydroepisterol into ergosta-5,7,22,24(28)-tetraen-3beta-ol by forming the C-22(23) double bond in the sterol side chain. Finally, ergosta-5,7,22,24(28)-tetraen-3beta-ol is substrate of the C-24(28) sterol reductase erg4 to produce ergosterol (Probable) (PubMed:18310029). In the genus Schizosaccharomyces, a second route exists between lanosterol and fecosterol, via the methylation of lanosterol to eburicol by erg6, followed by C14-demethylation by erg11/cyp1 and C4-demethylation by the demethylation complex erg25-erg26-erg27 (Probable) (PubMed:8586261).</text>
</comment>
<comment type="catalytic activity">
    <reaction evidence="3">
        <text>3-dehydro-4alpha-methylzymosterol + NADPH + H(+) = 4alpha-methylzymosterol + NADP(+)</text>
        <dbReference type="Rhea" id="RHEA:36379"/>
        <dbReference type="ChEBI" id="CHEBI:1949"/>
        <dbReference type="ChEBI" id="CHEBI:15378"/>
        <dbReference type="ChEBI" id="CHEBI:57783"/>
        <dbReference type="ChEBI" id="CHEBI:58349"/>
        <dbReference type="ChEBI" id="CHEBI:136486"/>
        <dbReference type="EC" id="1.1.1.270"/>
    </reaction>
    <physiologicalReaction direction="left-to-right" evidence="3">
        <dbReference type="Rhea" id="RHEA:36380"/>
    </physiologicalReaction>
</comment>
<comment type="pathway">
    <text evidence="3">Steroid biosynthesis; zymosterol biosynthesis; zymosterol from lanosterol: step 5/6.</text>
</comment>
<comment type="pathway">
    <text evidence="3">Steroid metabolism; ergosterol biosynthesis.</text>
</comment>
<comment type="subunit">
    <text evidence="3">Heterotetramer of erg25, erg26, erg27 and erg28 (By similarity). Erg28 acts as a scaffold to tether erg27 and other 4,4-demethylation-related enzymes, forming a demethylation enzyme complex, in the endoplasmic reticulum (By similarity).</text>
</comment>
<comment type="miscellaneous">
    <text evidence="4">In Aspergillus, the biosynthesis pathway of the sterol precursors leading to the prevalent sterol ergosterol differs from yeast. The ringsystem of lanosterol in S.cerevisiae is firstly demethylised in three enzymatic steps leading to the intermediate zymosterol and secondly a methyl group is added to zymosterol by the sterol 24-C-methyltransferase to form fecosterol. In Aspergillus, lanosterol is firstly transmethylated by the sterol 24-C-methyltransferase leading to the intermediate eburicol and secondly demethylated in three steps to form fecosterol. In the genus Schizosaccharomyces, 2 routes exist from lanosterol to erposterol: the classical one via zymosterol and the second one via the formation of eburicol followed by demethylation.</text>
</comment>
<comment type="similarity">
    <text evidence="5">Belongs to the short-chain dehydrogenases/reductases (SDR) family. ERG27 subfamily.</text>
</comment>
<comment type="sequence caution" evidence="5">
    <conflict type="erroneous initiation">
        <sequence resource="EMBL-CDS" id="BAA13878"/>
    </conflict>
    <text>Extended N-terminus.</text>
</comment>
<dbReference type="EC" id="1.1.1.270" evidence="3"/>
<dbReference type="EMBL" id="D89217">
    <property type="protein sequence ID" value="BAA13878.1"/>
    <property type="status" value="ALT_INIT"/>
    <property type="molecule type" value="mRNA"/>
</dbReference>
<dbReference type="EMBL" id="CU329671">
    <property type="protein sequence ID" value="CAA21246.1"/>
    <property type="molecule type" value="Genomic_DNA"/>
</dbReference>
<dbReference type="PIR" id="T39635">
    <property type="entry name" value="T39635"/>
</dbReference>
<dbReference type="PIR" id="T43038">
    <property type="entry name" value="T43038"/>
</dbReference>
<dbReference type="RefSeq" id="NP_595440.1">
    <property type="nucleotide sequence ID" value="NM_001021348.2"/>
</dbReference>
<dbReference type="SMR" id="O74732"/>
<dbReference type="BioGRID" id="276728">
    <property type="interactions" value="1"/>
</dbReference>
<dbReference type="FunCoup" id="O74732">
    <property type="interactions" value="62"/>
</dbReference>
<dbReference type="STRING" id="284812.O74732"/>
<dbReference type="iPTMnet" id="O74732"/>
<dbReference type="PaxDb" id="4896-SPBC1709.07.1"/>
<dbReference type="EnsemblFungi" id="SPBC1709.07.1">
    <property type="protein sequence ID" value="SPBC1709.07.1:pep"/>
    <property type="gene ID" value="SPBC1709.07"/>
</dbReference>
<dbReference type="GeneID" id="2540195"/>
<dbReference type="KEGG" id="spo:2540195"/>
<dbReference type="PomBase" id="SPBC1709.07">
    <property type="gene designation" value="erg27"/>
</dbReference>
<dbReference type="VEuPathDB" id="FungiDB:SPBC1709.07"/>
<dbReference type="eggNOG" id="KOG1478">
    <property type="taxonomic scope" value="Eukaryota"/>
</dbReference>
<dbReference type="HOGENOM" id="CLU_029944_1_0_1"/>
<dbReference type="InParanoid" id="O74732"/>
<dbReference type="OMA" id="WHNIDGY"/>
<dbReference type="PhylomeDB" id="O74732"/>
<dbReference type="UniPathway" id="UPA00768"/>
<dbReference type="UniPathway" id="UPA00770">
    <property type="reaction ID" value="UER00758"/>
</dbReference>
<dbReference type="PRO" id="PR:O74732"/>
<dbReference type="Proteomes" id="UP000002485">
    <property type="component" value="Chromosome II"/>
</dbReference>
<dbReference type="GO" id="GO:0005789">
    <property type="term" value="C:endoplasmic reticulum membrane"/>
    <property type="evidence" value="ECO:0000318"/>
    <property type="project" value="GO_Central"/>
</dbReference>
<dbReference type="GO" id="GO:0005811">
    <property type="term" value="C:lipid droplet"/>
    <property type="evidence" value="ECO:0000318"/>
    <property type="project" value="GO_Central"/>
</dbReference>
<dbReference type="GO" id="GO:0000253">
    <property type="term" value="F:3-beta-hydroxysteroid 3-dehydrogenase (NADP+) activity"/>
    <property type="evidence" value="ECO:0000318"/>
    <property type="project" value="GO_Central"/>
</dbReference>
<dbReference type="GO" id="GO:0006696">
    <property type="term" value="P:ergosterol biosynthetic process"/>
    <property type="evidence" value="ECO:0000318"/>
    <property type="project" value="GO_Central"/>
</dbReference>
<dbReference type="CDD" id="cd08941">
    <property type="entry name" value="3KS_SDR_c"/>
    <property type="match status" value="1"/>
</dbReference>
<dbReference type="Gene3D" id="3.40.50.720">
    <property type="entry name" value="NAD(P)-binding Rossmann-like Domain"/>
    <property type="match status" value="1"/>
</dbReference>
<dbReference type="InterPro" id="IPR051593">
    <property type="entry name" value="Ergosterol_Biosynth_ERG27"/>
</dbReference>
<dbReference type="InterPro" id="IPR042829">
    <property type="entry name" value="HSD17B7/Erg27"/>
</dbReference>
<dbReference type="InterPro" id="IPR036291">
    <property type="entry name" value="NAD(P)-bd_dom_sf"/>
</dbReference>
<dbReference type="InterPro" id="IPR002347">
    <property type="entry name" value="SDR_fam"/>
</dbReference>
<dbReference type="PANTHER" id="PTHR43647:SF1">
    <property type="entry name" value="3-KETO-STEROID REDUCTASE ERG27"/>
    <property type="match status" value="1"/>
</dbReference>
<dbReference type="PANTHER" id="PTHR43647">
    <property type="entry name" value="DEHYDROGENASE"/>
    <property type="match status" value="1"/>
</dbReference>
<dbReference type="Pfam" id="PF00106">
    <property type="entry name" value="adh_short"/>
    <property type="match status" value="1"/>
</dbReference>
<dbReference type="PRINTS" id="PR00081">
    <property type="entry name" value="GDHRDH"/>
</dbReference>
<dbReference type="SUPFAM" id="SSF51735">
    <property type="entry name" value="NAD(P)-binding Rossmann-fold domains"/>
    <property type="match status" value="1"/>
</dbReference>
<proteinExistence type="evidence at transcript level"/>
<sequence>MSFRKYALITGSNSGLGFGIATRLLQFYQPRLQDEPEVFTVILTCRSREKAEDACRRLKEFFPDRKIRLEYVLLDLSNMASVEAAVQDIATRFPKLDFVYLNAGAWDLEGIQWLKAIFSTLINPIQALTHPTFYKETAGRVSNDSLGYIFESNVFGHFYLKNRLAELKVLRSSTKVVLTSSLVAEKKSLDFEDLQCFHGEQPYQSSKRLLDVLHYAELEKGLPFEQYLVHPGLCTTNMYETFLGPILVMCAKLGFYICRLLGSPWHTISPYVAAFAFLWTALHATKEDQSIKWGAAVTRFGHERVLSTPVELILPSEQEKALEYMTKLYQEWKKKLVS</sequence>
<organism>
    <name type="scientific">Schizosaccharomyces pombe (strain 972 / ATCC 24843)</name>
    <name type="common">Fission yeast</name>
    <dbReference type="NCBI Taxonomy" id="284812"/>
    <lineage>
        <taxon>Eukaryota</taxon>
        <taxon>Fungi</taxon>
        <taxon>Dikarya</taxon>
        <taxon>Ascomycota</taxon>
        <taxon>Taphrinomycotina</taxon>
        <taxon>Schizosaccharomycetes</taxon>
        <taxon>Schizosaccharomycetales</taxon>
        <taxon>Schizosaccharomycetaceae</taxon>
        <taxon>Schizosaccharomyces</taxon>
    </lineage>
</organism>
<protein>
    <recommendedName>
        <fullName evidence="3">3-keto-steroid reductase erg27</fullName>
        <ecNumber evidence="3">1.1.1.270</ecNumber>
    </recommendedName>
    <alternativeName>
        <fullName evidence="3">Ergosterol biosynthetic protein 27</fullName>
    </alternativeName>
</protein>
<evidence type="ECO:0000250" key="1">
    <source>
        <dbReference type="UniProtKB" id="L0E2Z4"/>
    </source>
</evidence>
<evidence type="ECO:0000250" key="2">
    <source>
        <dbReference type="UniProtKB" id="O93868"/>
    </source>
</evidence>
<evidence type="ECO:0000250" key="3">
    <source>
        <dbReference type="UniProtKB" id="Q12452"/>
    </source>
</evidence>
<evidence type="ECO:0000269" key="4">
    <source>
    </source>
</evidence>
<evidence type="ECO:0000305" key="5"/>
<evidence type="ECO:0000305" key="6">
    <source>
    </source>
</evidence>
<evidence type="ECO:0000305" key="7">
    <source>
    </source>
</evidence>
<feature type="chain" id="PRO_0000371806" description="3-keto-steroid reductase erg27">
    <location>
        <begin position="1"/>
        <end position="338"/>
    </location>
</feature>
<feature type="active site" description="Proton donor" evidence="2">
    <location>
        <position position="180"/>
    </location>
</feature>
<feature type="active site" description="Proton donor" evidence="2">
    <location>
        <position position="203"/>
    </location>
</feature>
<feature type="active site" description="Lowers pKa of active site Tyr" evidence="2">
    <location>
        <position position="207"/>
    </location>
</feature>
<feature type="binding site" evidence="1">
    <location>
        <position position="16"/>
    </location>
    <ligand>
        <name>NADP(+)</name>
        <dbReference type="ChEBI" id="CHEBI:58349"/>
    </ligand>
</feature>
<feature type="binding site" evidence="1">
    <location>
        <position position="44"/>
    </location>
    <ligand>
        <name>NADP(+)</name>
        <dbReference type="ChEBI" id="CHEBI:58349"/>
    </ligand>
</feature>
<feature type="binding site" evidence="1">
    <location>
        <position position="50"/>
    </location>
    <ligand>
        <name>NADP(+)</name>
        <dbReference type="ChEBI" id="CHEBI:58349"/>
    </ligand>
</feature>
<feature type="binding site" evidence="1">
    <location>
        <position position="75"/>
    </location>
    <ligand>
        <name>NADP(+)</name>
        <dbReference type="ChEBI" id="CHEBI:58349"/>
    </ligand>
</feature>
<feature type="binding site" evidence="2">
    <location>
        <position position="203"/>
    </location>
    <ligand>
        <name>NADP(+)</name>
        <dbReference type="ChEBI" id="CHEBI:58349"/>
    </ligand>
</feature>
<feature type="binding site" evidence="2">
    <location>
        <position position="207"/>
    </location>
    <ligand>
        <name>NADP(+)</name>
        <dbReference type="ChEBI" id="CHEBI:58349"/>
    </ligand>
</feature>
<feature type="binding site" evidence="1">
    <location>
        <position position="236"/>
    </location>
    <ligand>
        <name>NADP(+)</name>
        <dbReference type="ChEBI" id="CHEBI:58349"/>
    </ligand>
</feature>
<feature type="sequence conflict" description="In Ref. 1; BAA13878." evidence="5" ref="1">
    <original>AGA</original>
    <variation>SGS</variation>
    <location>
        <begin position="103"/>
        <end position="105"/>
    </location>
</feature>
<feature type="sequence conflict" description="In Ref. 1; BAA13878." evidence="5" ref="1">
    <original>A</original>
    <variation>P</variation>
    <location>
        <position position="251"/>
    </location>
</feature>
<reference key="1">
    <citation type="journal article" date="1997" name="DNA Res.">
        <title>Identification of open reading frames in Schizosaccharomyces pombe cDNAs.</title>
        <authorList>
            <person name="Yoshioka S."/>
            <person name="Kato K."/>
            <person name="Nakai K."/>
            <person name="Okayama H."/>
            <person name="Nojima H."/>
        </authorList>
    </citation>
    <scope>NUCLEOTIDE SEQUENCE [MRNA]</scope>
    <source>
        <strain>PR745</strain>
    </source>
</reference>
<reference key="2">
    <citation type="journal article" date="2002" name="Nature">
        <title>The genome sequence of Schizosaccharomyces pombe.</title>
        <authorList>
            <person name="Wood V."/>
            <person name="Gwilliam R."/>
            <person name="Rajandream M.A."/>
            <person name="Lyne M.H."/>
            <person name="Lyne R."/>
            <person name="Stewart A."/>
            <person name="Sgouros J.G."/>
            <person name="Peat N."/>
            <person name="Hayles J."/>
            <person name="Baker S.G."/>
            <person name="Basham D."/>
            <person name="Bowman S."/>
            <person name="Brooks K."/>
            <person name="Brown D."/>
            <person name="Brown S."/>
            <person name="Chillingworth T."/>
            <person name="Churcher C.M."/>
            <person name="Collins M."/>
            <person name="Connor R."/>
            <person name="Cronin A."/>
            <person name="Davis P."/>
            <person name="Feltwell T."/>
            <person name="Fraser A."/>
            <person name="Gentles S."/>
            <person name="Goble A."/>
            <person name="Hamlin N."/>
            <person name="Harris D.E."/>
            <person name="Hidalgo J."/>
            <person name="Hodgson G."/>
            <person name="Holroyd S."/>
            <person name="Hornsby T."/>
            <person name="Howarth S."/>
            <person name="Huckle E.J."/>
            <person name="Hunt S."/>
            <person name="Jagels K."/>
            <person name="James K.D."/>
            <person name="Jones L."/>
            <person name="Jones M."/>
            <person name="Leather S."/>
            <person name="McDonald S."/>
            <person name="McLean J."/>
            <person name="Mooney P."/>
            <person name="Moule S."/>
            <person name="Mungall K.L."/>
            <person name="Murphy L.D."/>
            <person name="Niblett D."/>
            <person name="Odell C."/>
            <person name="Oliver K."/>
            <person name="O'Neil S."/>
            <person name="Pearson D."/>
            <person name="Quail M.A."/>
            <person name="Rabbinowitsch E."/>
            <person name="Rutherford K.M."/>
            <person name="Rutter S."/>
            <person name="Saunders D."/>
            <person name="Seeger K."/>
            <person name="Sharp S."/>
            <person name="Skelton J."/>
            <person name="Simmonds M.N."/>
            <person name="Squares R."/>
            <person name="Squares S."/>
            <person name="Stevens K."/>
            <person name="Taylor K."/>
            <person name="Taylor R.G."/>
            <person name="Tivey A."/>
            <person name="Walsh S.V."/>
            <person name="Warren T."/>
            <person name="Whitehead S."/>
            <person name="Woodward J.R."/>
            <person name="Volckaert G."/>
            <person name="Aert R."/>
            <person name="Robben J."/>
            <person name="Grymonprez B."/>
            <person name="Weltjens I."/>
            <person name="Vanstreels E."/>
            <person name="Rieger M."/>
            <person name="Schaefer M."/>
            <person name="Mueller-Auer S."/>
            <person name="Gabel C."/>
            <person name="Fuchs M."/>
            <person name="Duesterhoeft A."/>
            <person name="Fritzc C."/>
            <person name="Holzer E."/>
            <person name="Moestl D."/>
            <person name="Hilbert H."/>
            <person name="Borzym K."/>
            <person name="Langer I."/>
            <person name="Beck A."/>
            <person name="Lehrach H."/>
            <person name="Reinhardt R."/>
            <person name="Pohl T.M."/>
            <person name="Eger P."/>
            <person name="Zimmermann W."/>
            <person name="Wedler H."/>
            <person name="Wambutt R."/>
            <person name="Purnelle B."/>
            <person name="Goffeau A."/>
            <person name="Cadieu E."/>
            <person name="Dreano S."/>
            <person name="Gloux S."/>
            <person name="Lelaure V."/>
            <person name="Mottier S."/>
            <person name="Galibert F."/>
            <person name="Aves S.J."/>
            <person name="Xiang Z."/>
            <person name="Hunt C."/>
            <person name="Moore K."/>
            <person name="Hurst S.M."/>
            <person name="Lucas M."/>
            <person name="Rochet M."/>
            <person name="Gaillardin C."/>
            <person name="Tallada V.A."/>
            <person name="Garzon A."/>
            <person name="Thode G."/>
            <person name="Daga R.R."/>
            <person name="Cruzado L."/>
            <person name="Jimenez J."/>
            <person name="Sanchez M."/>
            <person name="del Rey F."/>
            <person name="Benito J."/>
            <person name="Dominguez A."/>
            <person name="Revuelta J.L."/>
            <person name="Moreno S."/>
            <person name="Armstrong J."/>
            <person name="Forsburg S.L."/>
            <person name="Cerutti L."/>
            <person name="Lowe T."/>
            <person name="McCombie W.R."/>
            <person name="Paulsen I."/>
            <person name="Potashkin J."/>
            <person name="Shpakovski G.V."/>
            <person name="Ussery D."/>
            <person name="Barrell B.G."/>
            <person name="Nurse P."/>
        </authorList>
    </citation>
    <scope>NUCLEOTIDE SEQUENCE [LARGE SCALE GENOMIC DNA]</scope>
    <source>
        <strain>972 / ATCC 24843</strain>
    </source>
</reference>
<reference key="3">
    <citation type="journal article" date="1995" name="FEMS Microbiol. Lett.">
        <title>Identification of 24-methylene-24,25-dihydrolanosterol as a precursor of ergosterol in the yeasts Schizosaccharomyces pombe and Schizosaccharomyces octosporus.</title>
        <authorList>
            <person name="Harmouch N."/>
            <person name="Coulon J."/>
            <person name="Bonaly R."/>
        </authorList>
    </citation>
    <scope>FUNCTION</scope>
</reference>
<reference key="4">
    <citation type="journal article" date="2008" name="Microbiology">
        <title>Multiple functions of ergosterol in the fission yeast Schizosaccharomyces pombe.</title>
        <authorList>
            <person name="Iwaki T."/>
            <person name="Iefuji H."/>
            <person name="Hiraga Y."/>
            <person name="Hosomi A."/>
            <person name="Morita T."/>
            <person name="Giga-Hama Y."/>
            <person name="Takegawa K."/>
        </authorList>
    </citation>
    <scope>FUNCTION</scope>
</reference>
<gene>
    <name evidence="3" type="primary">erg27</name>
    <name type="ORF">SPBC1709.07</name>
</gene>
<keyword id="KW-0444">Lipid biosynthesis</keyword>
<keyword id="KW-0443">Lipid metabolism</keyword>
<keyword id="KW-0521">NADP</keyword>
<keyword id="KW-0560">Oxidoreductase</keyword>
<keyword id="KW-1185">Reference proteome</keyword>
<keyword id="KW-0752">Steroid biosynthesis</keyword>
<name>ERG27_SCHPO</name>
<accession>O74732</accession>
<accession>P78867</accession>
<accession>Q1L846</accession>